<sequence>TKDPELKQCKKQQKKQQQYDDDDKK</sequence>
<protein>
    <recommendedName>
        <fullName evidence="3">Insulin mimetic protein</fullName>
        <shortName evidence="3">Cq-IMP</shortName>
    </recommendedName>
</protein>
<comment type="tissue specificity">
    <text evidence="2">Expressed in seed.</text>
</comment>
<comment type="PTM">
    <text evidence="2">Glycosylated.</text>
</comment>
<comment type="mass spectrometry"/>
<comment type="miscellaneous">
    <text evidence="2">Exhibits hypoglycemic activity in RIN-5F cells (in vitro) and in diabetic mice (in vivo). No hemagglutinating activity on rabbit erythrocytes and does not increase IgG and IgE immunoglobulins in rabbit plasma.</text>
</comment>
<reference evidence="4" key="1">
    <citation type="journal article" date="2020" name="Int. J. Biol. Macromol.">
        <title>Orally hypoglycemic activity of an insulin mimetic glycoprotein isolated from Cnidoscolus quercifolius Pohl. (Euphorbiaceae) seeds, Cq-IMP.</title>
        <authorList>
            <person name="Moura L.F.W.G."/>
            <person name="da Silva Costa H.P."/>
            <person name="da Silva Neto J.X."/>
            <person name="Dias L.P."/>
            <person name="Magalhaes F.E.A."/>
            <person name="van Tilburg M.F."/>
            <person name="Florean E.O.P.T."/>
            <person name="de Oliveira J.T.A."/>
            <person name="Oliveira Bezerra de Sousa D."/>
            <person name="Guedes M.I.F."/>
        </authorList>
    </citation>
    <scope>PROTEIN SEQUENCE</scope>
    <scope>TISSUE SPECIFICITY</scope>
    <scope>GLYCOSYLATION</scope>
    <scope>MASS SPECTROMETRY</scope>
    <source>
        <tissue evidence="3">Seed</tissue>
    </source>
</reference>
<feature type="chain" id="PRO_0000450850" description="Insulin mimetic protein">
    <location>
        <begin position="1"/>
        <end position="25" status="greater than"/>
    </location>
</feature>
<feature type="region of interest" description="Disordered" evidence="1">
    <location>
        <begin position="1"/>
        <end position="25"/>
    </location>
</feature>
<feature type="non-terminal residue" evidence="3">
    <location>
        <position position="25"/>
    </location>
</feature>
<keyword id="KW-0903">Direct protein sequencing</keyword>
<keyword id="KW-0325">Glycoprotein</keyword>
<proteinExistence type="evidence at protein level"/>
<name>IMP_CNIQU</name>
<accession>C0HLQ3</accession>
<organism evidence="3">
    <name type="scientific">Cnidoscolus quercifolius</name>
    <dbReference type="NCBI Taxonomy" id="2358373"/>
    <lineage>
        <taxon>Eukaryota</taxon>
        <taxon>Viridiplantae</taxon>
        <taxon>Streptophyta</taxon>
        <taxon>Embryophyta</taxon>
        <taxon>Tracheophyta</taxon>
        <taxon>Spermatophyta</taxon>
        <taxon>Magnoliopsida</taxon>
        <taxon>eudicotyledons</taxon>
        <taxon>Gunneridae</taxon>
        <taxon>Pentapetalae</taxon>
        <taxon>rosids</taxon>
        <taxon>fabids</taxon>
        <taxon>Malpighiales</taxon>
        <taxon>Euphorbiaceae</taxon>
        <taxon>Crotonoideae</taxon>
        <taxon>Manihoteae</taxon>
        <taxon>Cnidoscolus</taxon>
    </lineage>
</organism>
<evidence type="ECO:0000256" key="1">
    <source>
        <dbReference type="SAM" id="MobiDB-lite"/>
    </source>
</evidence>
<evidence type="ECO:0000269" key="2">
    <source>
    </source>
</evidence>
<evidence type="ECO:0000303" key="3">
    <source>
    </source>
</evidence>
<evidence type="ECO:0000305" key="4"/>